<evidence type="ECO:0000269" key="1">
    <source>
    </source>
</evidence>
<evidence type="ECO:0000269" key="2">
    <source>
    </source>
</evidence>
<evidence type="ECO:0000269" key="3">
    <source>
    </source>
</evidence>
<evidence type="ECO:0000269" key="4">
    <source>
    </source>
</evidence>
<evidence type="ECO:0000269" key="5">
    <source>
    </source>
</evidence>
<evidence type="ECO:0000269" key="6">
    <source>
    </source>
</evidence>
<evidence type="ECO:0000269" key="7">
    <source>
    </source>
</evidence>
<evidence type="ECO:0000305" key="8"/>
<evidence type="ECO:0007744" key="9">
    <source>
        <dbReference type="PDB" id="2JMI"/>
    </source>
</evidence>
<evidence type="ECO:0007744" key="10">
    <source>
        <dbReference type="PDB" id="2JMJ"/>
    </source>
</evidence>
<evidence type="ECO:0007829" key="11">
    <source>
        <dbReference type="PDB" id="2JMI"/>
    </source>
</evidence>
<organism>
    <name type="scientific">Saccharomyces cerevisiae (strain ATCC 204508 / S288c)</name>
    <name type="common">Baker's yeast</name>
    <dbReference type="NCBI Taxonomy" id="559292"/>
    <lineage>
        <taxon>Eukaryota</taxon>
        <taxon>Fungi</taxon>
        <taxon>Dikarya</taxon>
        <taxon>Ascomycota</taxon>
        <taxon>Saccharomycotina</taxon>
        <taxon>Saccharomycetes</taxon>
        <taxon>Saccharomycetales</taxon>
        <taxon>Saccharomycetaceae</taxon>
        <taxon>Saccharomyces</taxon>
    </lineage>
</organism>
<protein>
    <recommendedName>
        <fullName>Protein YNG1</fullName>
    </recommendedName>
    <alternativeName>
        <fullName>ING1 homolog 1</fullName>
    </alternativeName>
</protein>
<name>YNG1_YEAST</name>
<proteinExistence type="evidence at protein level"/>
<keyword id="KW-0002">3D-structure</keyword>
<keyword id="KW-0479">Metal-binding</keyword>
<keyword id="KW-0539">Nucleus</keyword>
<keyword id="KW-1185">Reference proteome</keyword>
<keyword id="KW-0804">Transcription</keyword>
<keyword id="KW-0805">Transcription regulation</keyword>
<keyword id="KW-0862">Zinc</keyword>
<keyword id="KW-0863">Zinc-finger</keyword>
<dbReference type="EMBL" id="Z70678">
    <property type="protein sequence ID" value="CAA94549.1"/>
    <property type="molecule type" value="Genomic_DNA"/>
</dbReference>
<dbReference type="EMBL" id="Z74972">
    <property type="protein sequence ID" value="CAA99257.1"/>
    <property type="molecule type" value="Genomic_DNA"/>
</dbReference>
<dbReference type="EMBL" id="AY557753">
    <property type="protein sequence ID" value="AAS56079.1"/>
    <property type="molecule type" value="Genomic_DNA"/>
</dbReference>
<dbReference type="EMBL" id="BK006948">
    <property type="protein sequence ID" value="DAA10843.1"/>
    <property type="molecule type" value="Genomic_DNA"/>
</dbReference>
<dbReference type="PIR" id="S66947">
    <property type="entry name" value="S66947"/>
</dbReference>
<dbReference type="RefSeq" id="NP_014707.1">
    <property type="nucleotide sequence ID" value="NM_001183483.1"/>
</dbReference>
<dbReference type="PDB" id="2JMI">
    <property type="method" value="NMR"/>
    <property type="chains" value="A=141-219"/>
</dbReference>
<dbReference type="PDB" id="2JMJ">
    <property type="method" value="NMR"/>
    <property type="chains" value="A=141-219"/>
</dbReference>
<dbReference type="PDB" id="8U77">
    <property type="method" value="X-ray"/>
    <property type="resolution" value="1.93 A"/>
    <property type="chains" value="B/D/F/H=113-124"/>
</dbReference>
<dbReference type="PDBsum" id="2JMI"/>
<dbReference type="PDBsum" id="2JMJ"/>
<dbReference type="PDBsum" id="8U77"/>
<dbReference type="SMR" id="Q08465"/>
<dbReference type="BioGRID" id="34463">
    <property type="interactions" value="157"/>
</dbReference>
<dbReference type="ComplexPortal" id="CPX-1810">
    <property type="entry name" value="NuA3 histone acetyltransferase complex"/>
</dbReference>
<dbReference type="DIP" id="DIP-3833N"/>
<dbReference type="FunCoup" id="Q08465">
    <property type="interactions" value="185"/>
</dbReference>
<dbReference type="IntAct" id="Q08465">
    <property type="interactions" value="8"/>
</dbReference>
<dbReference type="MINT" id="Q08465"/>
<dbReference type="STRING" id="4932.YOR064C"/>
<dbReference type="iPTMnet" id="Q08465"/>
<dbReference type="PaxDb" id="4932-YOR064C"/>
<dbReference type="PeptideAtlas" id="Q08465"/>
<dbReference type="EnsemblFungi" id="YOR064C_mRNA">
    <property type="protein sequence ID" value="YOR064C"/>
    <property type="gene ID" value="YOR064C"/>
</dbReference>
<dbReference type="GeneID" id="854230"/>
<dbReference type="KEGG" id="sce:YOR064C"/>
<dbReference type="AGR" id="SGD:S000005590"/>
<dbReference type="SGD" id="S000005590">
    <property type="gene designation" value="YNG1"/>
</dbReference>
<dbReference type="VEuPathDB" id="FungiDB:YOR064C"/>
<dbReference type="eggNOG" id="KOG1973">
    <property type="taxonomic scope" value="Eukaryota"/>
</dbReference>
<dbReference type="HOGENOM" id="CLU_074406_1_0_1"/>
<dbReference type="InParanoid" id="Q08465"/>
<dbReference type="OMA" id="PCDIVRS"/>
<dbReference type="OrthoDB" id="5411773at2759"/>
<dbReference type="BioCyc" id="YEAST:G3O-33604-MONOMER"/>
<dbReference type="Reactome" id="R-SCE-3899300">
    <property type="pathway name" value="SUMOylation of transcription cofactors"/>
</dbReference>
<dbReference type="Reactome" id="R-SCE-6811555">
    <property type="pathway name" value="PI5P Regulates TP53 Acetylation"/>
</dbReference>
<dbReference type="BioGRID-ORCS" id="854230">
    <property type="hits" value="8 hits in 10 CRISPR screens"/>
</dbReference>
<dbReference type="EvolutionaryTrace" id="Q08465"/>
<dbReference type="PRO" id="PR:Q08465"/>
<dbReference type="Proteomes" id="UP000002311">
    <property type="component" value="Chromosome XV"/>
</dbReference>
<dbReference type="RNAct" id="Q08465">
    <property type="molecule type" value="protein"/>
</dbReference>
<dbReference type="GO" id="GO:0033100">
    <property type="term" value="C:NuA3 histone acetyltransferase complex"/>
    <property type="evidence" value="ECO:0000314"/>
    <property type="project" value="SGD"/>
</dbReference>
<dbReference type="GO" id="GO:1990467">
    <property type="term" value="C:NuA3a histone acetyltransferase complex"/>
    <property type="evidence" value="ECO:0000314"/>
    <property type="project" value="SGD"/>
</dbReference>
<dbReference type="GO" id="GO:0005634">
    <property type="term" value="C:nucleus"/>
    <property type="evidence" value="ECO:0000303"/>
    <property type="project" value="ComplexPortal"/>
</dbReference>
<dbReference type="GO" id="GO:0140002">
    <property type="term" value="F:histone H3K4me3 reader activity"/>
    <property type="evidence" value="ECO:0000314"/>
    <property type="project" value="UniProtKB"/>
</dbReference>
<dbReference type="GO" id="GO:0035064">
    <property type="term" value="F:methylated histone binding"/>
    <property type="evidence" value="ECO:0000314"/>
    <property type="project" value="SGD"/>
</dbReference>
<dbReference type="GO" id="GO:0008270">
    <property type="term" value="F:zinc ion binding"/>
    <property type="evidence" value="ECO:0007669"/>
    <property type="project" value="UniProtKB-KW"/>
</dbReference>
<dbReference type="GO" id="GO:0006325">
    <property type="term" value="P:chromatin organization"/>
    <property type="evidence" value="ECO:0000315"/>
    <property type="project" value="SGD"/>
</dbReference>
<dbReference type="GO" id="GO:0006338">
    <property type="term" value="P:chromatin remodeling"/>
    <property type="evidence" value="ECO:0007669"/>
    <property type="project" value="GOC"/>
</dbReference>
<dbReference type="GO" id="GO:0006351">
    <property type="term" value="P:DNA-templated transcription"/>
    <property type="evidence" value="ECO:0000303"/>
    <property type="project" value="ComplexPortal"/>
</dbReference>
<dbReference type="GO" id="GO:0032968">
    <property type="term" value="P:positive regulation of transcription elongation by RNA polymerase II"/>
    <property type="evidence" value="ECO:0000316"/>
    <property type="project" value="SGD"/>
</dbReference>
<dbReference type="CDD" id="cd17017">
    <property type="entry name" value="ING_Yng1p"/>
    <property type="match status" value="1"/>
</dbReference>
<dbReference type="CDD" id="cd15587">
    <property type="entry name" value="PHD_Yng1p_like"/>
    <property type="match status" value="1"/>
</dbReference>
<dbReference type="FunFam" id="3.30.40.10:FF:000569">
    <property type="entry name" value="Chromatin modification-related protein"/>
    <property type="match status" value="1"/>
</dbReference>
<dbReference type="Gene3D" id="3.30.40.10">
    <property type="entry name" value="Zinc/RING finger domain, C3HC4 (zinc finger)"/>
    <property type="match status" value="1"/>
</dbReference>
<dbReference type="IDEAL" id="IID50148"/>
<dbReference type="InterPro" id="IPR028651">
    <property type="entry name" value="ING_fam"/>
</dbReference>
<dbReference type="InterPro" id="IPR011011">
    <property type="entry name" value="Znf_FYVE_PHD"/>
</dbReference>
<dbReference type="InterPro" id="IPR001965">
    <property type="entry name" value="Znf_PHD"/>
</dbReference>
<dbReference type="InterPro" id="IPR013083">
    <property type="entry name" value="Znf_RING/FYVE/PHD"/>
</dbReference>
<dbReference type="PANTHER" id="PTHR10333">
    <property type="entry name" value="INHIBITOR OF GROWTH PROTEIN"/>
    <property type="match status" value="1"/>
</dbReference>
<dbReference type="PANTHER" id="PTHR10333:SF103">
    <property type="entry name" value="INHIBITOR OF GROWTH PROTEIN 3"/>
    <property type="match status" value="1"/>
</dbReference>
<dbReference type="SMART" id="SM00249">
    <property type="entry name" value="PHD"/>
    <property type="match status" value="1"/>
</dbReference>
<dbReference type="SUPFAM" id="SSF57903">
    <property type="entry name" value="FYVE/PHD zinc finger"/>
    <property type="match status" value="1"/>
</dbReference>
<gene>
    <name type="primary">YNG1</name>
    <name type="ordered locus">YOR064C</name>
    <name type="ORF">YOR29-15</name>
</gene>
<reference key="1">
    <citation type="journal article" date="1997" name="Yeast">
        <title>The sequence of a 54.7 kb fragment of yeast chromosome XV reveals the presence of two tRNAs and 24 new open reading frames.</title>
        <authorList>
            <person name="Valens M."/>
            <person name="Bohn C."/>
            <person name="Daignan-Fornier B."/>
            <person name="Dang V.-D."/>
            <person name="Bolotin-Fukuhara M."/>
        </authorList>
    </citation>
    <scope>NUCLEOTIDE SEQUENCE [GENOMIC DNA]</scope>
</reference>
<reference key="2">
    <citation type="journal article" date="1997" name="Nature">
        <title>The nucleotide sequence of Saccharomyces cerevisiae chromosome XV.</title>
        <authorList>
            <person name="Dujon B."/>
            <person name="Albermann K."/>
            <person name="Aldea M."/>
            <person name="Alexandraki D."/>
            <person name="Ansorge W."/>
            <person name="Arino J."/>
            <person name="Benes V."/>
            <person name="Bohn C."/>
            <person name="Bolotin-Fukuhara M."/>
            <person name="Bordonne R."/>
            <person name="Boyer J."/>
            <person name="Camasses A."/>
            <person name="Casamayor A."/>
            <person name="Casas C."/>
            <person name="Cheret G."/>
            <person name="Cziepluch C."/>
            <person name="Daignan-Fornier B."/>
            <person name="Dang V.-D."/>
            <person name="de Haan M."/>
            <person name="Delius H."/>
            <person name="Durand P."/>
            <person name="Fairhead C."/>
            <person name="Feldmann H."/>
            <person name="Gaillon L."/>
            <person name="Galisson F."/>
            <person name="Gamo F.-J."/>
            <person name="Gancedo C."/>
            <person name="Goffeau A."/>
            <person name="Goulding S.E."/>
            <person name="Grivell L.A."/>
            <person name="Habbig B."/>
            <person name="Hand N.J."/>
            <person name="Hani J."/>
            <person name="Hattenhorst U."/>
            <person name="Hebling U."/>
            <person name="Hernando Y."/>
            <person name="Herrero E."/>
            <person name="Heumann K."/>
            <person name="Hiesel R."/>
            <person name="Hilger F."/>
            <person name="Hofmann B."/>
            <person name="Hollenberg C.P."/>
            <person name="Hughes B."/>
            <person name="Jauniaux J.-C."/>
            <person name="Kalogeropoulos A."/>
            <person name="Katsoulou C."/>
            <person name="Kordes E."/>
            <person name="Lafuente M.J."/>
            <person name="Landt O."/>
            <person name="Louis E.J."/>
            <person name="Maarse A.C."/>
            <person name="Madania A."/>
            <person name="Mannhaupt G."/>
            <person name="Marck C."/>
            <person name="Martin R.P."/>
            <person name="Mewes H.-W."/>
            <person name="Michaux G."/>
            <person name="Paces V."/>
            <person name="Parle-McDermott A.G."/>
            <person name="Pearson B.M."/>
            <person name="Perrin A."/>
            <person name="Pettersson B."/>
            <person name="Poch O."/>
            <person name="Pohl T.M."/>
            <person name="Poirey R."/>
            <person name="Portetelle D."/>
            <person name="Pujol A."/>
            <person name="Purnelle B."/>
            <person name="Ramezani Rad M."/>
            <person name="Rechmann S."/>
            <person name="Schwager C."/>
            <person name="Schweizer M."/>
            <person name="Sor F."/>
            <person name="Sterky F."/>
            <person name="Tarassov I.A."/>
            <person name="Teodoru C."/>
            <person name="Tettelin H."/>
            <person name="Thierry A."/>
            <person name="Tobiasch E."/>
            <person name="Tzermia M."/>
            <person name="Uhlen M."/>
            <person name="Unseld M."/>
            <person name="Valens M."/>
            <person name="Vandenbol M."/>
            <person name="Vetter I."/>
            <person name="Vlcek C."/>
            <person name="Voet M."/>
            <person name="Volckaert G."/>
            <person name="Voss H."/>
            <person name="Wambutt R."/>
            <person name="Wedler H."/>
            <person name="Wiemann S."/>
            <person name="Winsor B."/>
            <person name="Wolfe K.H."/>
            <person name="Zollner A."/>
            <person name="Zumstein E."/>
            <person name="Kleine K."/>
        </authorList>
    </citation>
    <scope>NUCLEOTIDE SEQUENCE [LARGE SCALE GENOMIC DNA]</scope>
    <source>
        <strain>ATCC 204508 / S288c</strain>
    </source>
</reference>
<reference key="3">
    <citation type="journal article" date="2014" name="G3 (Bethesda)">
        <title>The reference genome sequence of Saccharomyces cerevisiae: Then and now.</title>
        <authorList>
            <person name="Engel S.R."/>
            <person name="Dietrich F.S."/>
            <person name="Fisk D.G."/>
            <person name="Binkley G."/>
            <person name="Balakrishnan R."/>
            <person name="Costanzo M.C."/>
            <person name="Dwight S.S."/>
            <person name="Hitz B.C."/>
            <person name="Karra K."/>
            <person name="Nash R.S."/>
            <person name="Weng S."/>
            <person name="Wong E.D."/>
            <person name="Lloyd P."/>
            <person name="Skrzypek M.S."/>
            <person name="Miyasato S.R."/>
            <person name="Simison M."/>
            <person name="Cherry J.M."/>
        </authorList>
    </citation>
    <scope>GENOME REANNOTATION</scope>
    <source>
        <strain>ATCC 204508 / S288c</strain>
    </source>
</reference>
<reference key="4">
    <citation type="journal article" date="2007" name="Genome Res.">
        <title>Approaching a complete repository of sequence-verified protein-encoding clones for Saccharomyces cerevisiae.</title>
        <authorList>
            <person name="Hu Y."/>
            <person name="Rolfs A."/>
            <person name="Bhullar B."/>
            <person name="Murthy T.V.S."/>
            <person name="Zhu C."/>
            <person name="Berger M.F."/>
            <person name="Camargo A.A."/>
            <person name="Kelley F."/>
            <person name="McCarron S."/>
            <person name="Jepson D."/>
            <person name="Richardson A."/>
            <person name="Raphael J."/>
            <person name="Moreira D."/>
            <person name="Taycher E."/>
            <person name="Zuo D."/>
            <person name="Mohr S."/>
            <person name="Kane M.F."/>
            <person name="Williamson J."/>
            <person name="Simpson A.J.G."/>
            <person name="Bulyk M.L."/>
            <person name="Harlow E."/>
            <person name="Marsischky G."/>
            <person name="Kolodner R.D."/>
            <person name="LaBaer J."/>
        </authorList>
    </citation>
    <scope>NUCLEOTIDE SEQUENCE [GENOMIC DNA]</scope>
    <source>
        <strain>ATCC 204508 / S288c</strain>
    </source>
</reference>
<reference key="5">
    <citation type="journal article" date="2002" name="Mol. Cell. Biol.">
        <title>Yng1p modulates the activity of Sas3p as a component of the yeast NuA3 Hhistone acetyltransferase complex.</title>
        <authorList>
            <person name="Howe L."/>
            <person name="Kusch T."/>
            <person name="Muster N."/>
            <person name="Chaterji R."/>
            <person name="Yates J.R. III"/>
            <person name="Workman J.L."/>
        </authorList>
    </citation>
    <scope>FUNCTION</scope>
    <scope>IDENTIFICATION BY MASS SPECTROMETRY</scope>
    <scope>IDENTIFICATION IN THE NUA3 COMPLEX</scope>
</reference>
<reference key="6">
    <citation type="journal article" date="2003" name="Nature">
        <title>Global analysis of protein localization in budding yeast.</title>
        <authorList>
            <person name="Huh W.-K."/>
            <person name="Falvo J.V."/>
            <person name="Gerke L.C."/>
            <person name="Carroll A.S."/>
            <person name="Howson R.W."/>
            <person name="Weissman J.S."/>
            <person name="O'Shea E.K."/>
        </authorList>
    </citation>
    <scope>SUBCELLULAR LOCATION [LARGE SCALE ANALYSIS]</scope>
</reference>
<reference key="7">
    <citation type="journal article" date="2003" name="Nature">
        <title>Global analysis of protein expression in yeast.</title>
        <authorList>
            <person name="Ghaemmaghami S."/>
            <person name="Huh W.-K."/>
            <person name="Bower K."/>
            <person name="Howson R.W."/>
            <person name="Belle A."/>
            <person name="Dephoure N."/>
            <person name="O'Shea E.K."/>
            <person name="Weissman J.S."/>
        </authorList>
    </citation>
    <scope>LEVEL OF PROTEIN EXPRESSION [LARGE SCALE ANALYSIS]</scope>
</reference>
<reference key="8">
    <citation type="journal article" date="2006" name="Nature">
        <title>ING2 PHD domain links histone H3 lysine 4 methylation to active gene repression.</title>
        <authorList>
            <person name="Shi X."/>
            <person name="Hong T."/>
            <person name="Walter K.L."/>
            <person name="Ewalt M."/>
            <person name="Michishita E."/>
            <person name="Hung T."/>
            <person name="Carney D."/>
            <person name="Pena P."/>
            <person name="Lan F."/>
            <person name="Kaadige M.R."/>
            <person name="Lacoste N."/>
            <person name="Cayrou C."/>
            <person name="Davrazou F."/>
            <person name="Saha A."/>
            <person name="Cairns B.R."/>
            <person name="Ayer D.E."/>
            <person name="Kutateladze T.G."/>
            <person name="Shi Y."/>
            <person name="Cote J."/>
            <person name="Chua K.F."/>
            <person name="Gozani O."/>
        </authorList>
    </citation>
    <scope>DOMAIN PHD-TYPE ZINC-FINGER</scope>
    <scope>INTERACTION WITH HISTONES H3K4ME3 AND H3K4ME2</scope>
</reference>
<reference key="9">
    <citation type="journal article" date="2009" name="Science">
        <title>Global analysis of Cdk1 substrate phosphorylation sites provides insights into evolution.</title>
        <authorList>
            <person name="Holt L.J."/>
            <person name="Tuch B.B."/>
            <person name="Villen J."/>
            <person name="Johnson A.D."/>
            <person name="Gygi S.P."/>
            <person name="Morgan D.O."/>
        </authorList>
    </citation>
    <scope>IDENTIFICATION BY MASS SPECTROMETRY [LARGE SCALE ANALYSIS]</scope>
</reference>
<reference key="10">
    <citation type="journal article" date="2014" name="Mol. Cell. Proteomics">
        <title>A PWWP domain-containing protein targets the NuA3 acetyltransferase complex via histone H3 lysine 36 trimethylation to coordinate transcriptional elongation at coding regions.</title>
        <authorList>
            <person name="Gilbert T.M."/>
            <person name="McDaniel S.L."/>
            <person name="Byrum S.D."/>
            <person name="Cades J.A."/>
            <person name="Dancy B.C."/>
            <person name="Wade H."/>
            <person name="Tackett A.J."/>
            <person name="Strahl B.D."/>
            <person name="Taverna S.D."/>
        </authorList>
    </citation>
    <scope>FUNCTION</scope>
    <scope>SUBUNIT</scope>
</reference>
<reference key="11">
    <citation type="journal article" date="2017" name="Genetics">
        <title>Histone H3K4 and H3K36 methylation independently recruit the NuA3 histone acetyltransferase in Saccharomyces cerevisiae.</title>
        <authorList>
            <person name="Martin B.J."/>
            <person name="McBurney K.L."/>
            <person name="Maltby V.E."/>
            <person name="Jensen K.N."/>
            <person name="Brind'Amour J."/>
            <person name="Howe L.J."/>
        </authorList>
    </citation>
    <scope>DOMAIN</scope>
</reference>
<reference evidence="9 10" key="12">
    <citation type="journal article" date="2006" name="Mol. Cell">
        <title>Yng1 PHD finger binding to H3 trimethylated at K4 promotes NuA3 HAT activity at K14 of H3 and transcription at a subset of targeted ORFs.</title>
        <authorList>
            <person name="Taverna S.D."/>
            <person name="Ilin S."/>
            <person name="Rogers R.S."/>
            <person name="Tanny J.C."/>
            <person name="Lavender H."/>
            <person name="Li H."/>
            <person name="Baker L."/>
            <person name="Boyle J."/>
            <person name="Blair L.P."/>
            <person name="Chait B.T."/>
            <person name="Patel D.J."/>
            <person name="Aitchison J.D."/>
            <person name="Tackett A.J."/>
            <person name="Allis C.D."/>
        </authorList>
    </citation>
    <scope>STRUCTURE BY NMR OF 141-219</scope>
    <scope>FUNCTION</scope>
    <scope>INTERACTION WITH HISTONE H3</scope>
    <scope>FUNCTION OF THE NUA3 COMPLEX</scope>
    <scope>IDENTIFICATION IN THE NUA3 COMPLEX</scope>
    <scope>IDENTIFICATION BY MASS SPECTROMETRY</scope>
</reference>
<comment type="function">
    <text evidence="1 5 6">Histone-binding component of the NuA3a histone acetyltransferase complex. Targets the NuA3a HAT complex via histone H3K4me3 to facilitate transcription initiation at promoter regions. SAS3 then acetylates H3K14, leading to transcription initiation at a subset of genes. YNG1 is required for the HAT activity of NuA3 but not for its integrity. Mediates the interaction of SAS3 with nucleosomes.</text>
</comment>
<comment type="subunit">
    <text evidence="1 4 5 6">Component of the NuA3 histone acetyltransferase (HAT) complex (PubMed:12077334, PubMed:17157260). The NuA3 HAT complex has 2 functionally distinct forms that participate in transcription (PubMed:25104842). The NuA3a HAT complex is composed of at least NTO1, SAS3, TAF14, YNG1 and EAF6 (PubMed:12077334, PubMed:17157260). The NuA3b HAT complex contains an additional subunit, PDP3 (PubMed:25104842). Interacts with H3K4me3 and to a lesser extent with H3K4me2 (PubMed:16728974, PubMed:17157260).</text>
</comment>
<comment type="interaction">
    <interactant intactId="EBI-31890">
        <id>Q08465</id>
    </interactant>
    <interactant intactId="EBI-8098">
        <id>P61830</id>
        <label>HHT2</label>
    </interactant>
    <organismsDiffer>false</organismsDiffer>
    <experiments>5</experiments>
</comment>
<comment type="interaction">
    <interactant intactId="EBI-31890">
        <id>Q08465</id>
    </interactant>
    <interactant intactId="EBI-16484">
        <id>P34218</id>
        <label>SAS3</label>
    </interactant>
    <organismsDiffer>false</organismsDiffer>
    <experiments>5</experiments>
</comment>
<comment type="interaction">
    <interactant intactId="EBI-31890">
        <id>Q08465</id>
    </interactant>
    <interactant intactId="EBI-18920">
        <id>P35189</id>
        <label>TAF14</label>
    </interactant>
    <organismsDiffer>false</organismsDiffer>
    <experiments>3</experiments>
</comment>
<comment type="subcellular location">
    <subcellularLocation>
        <location evidence="2">Nucleus</location>
    </subcellularLocation>
</comment>
<comment type="domain">
    <text evidence="4 7">The PHD-type zinc finger mediates the binding to H3K4me3.</text>
</comment>
<comment type="miscellaneous">
    <text evidence="3">Present with 861 molecules/cell in log phase SD medium.</text>
</comment>
<comment type="similarity">
    <text evidence="8">Belongs to the ING family.</text>
</comment>
<sequence length="219" mass="25350">MEHLANENSDSDIRYSFLSTLDHLPCELIRSLRLMQTIDLFKNEEDEPGMERACRDLLLVATYINDLVDDQIHFLKQHKKELEIQKSVTKNFNSSLENIKSKLTLEEPGAYKEPKLLLKINLKKAKSRERKESITSPTIGINQGDVTEGNNNQEEVYCFCRNVSYGPMVACDNPACPFEWFHYGCVGLKQAPKGKWYCSKDCKEIANQRSKSKRQKRRK</sequence>
<feature type="chain" id="PRO_0000240248" description="Protein YNG1">
    <location>
        <begin position="1"/>
        <end position="219"/>
    </location>
</feature>
<feature type="zinc finger region" description="PHD-type; degenerate">
    <location>
        <begin position="155"/>
        <end position="204"/>
    </location>
</feature>
<feature type="binding site" evidence="5">
    <location>
        <position position="158"/>
    </location>
    <ligand>
        <name>Zn(2+)</name>
        <dbReference type="ChEBI" id="CHEBI:29105"/>
        <label>1</label>
    </ligand>
</feature>
<feature type="binding site" evidence="5">
    <location>
        <position position="160"/>
    </location>
    <ligand>
        <name>Zn(2+)</name>
        <dbReference type="ChEBI" id="CHEBI:29105"/>
        <label>1</label>
    </ligand>
</feature>
<feature type="binding site" evidence="5">
    <location>
        <position position="171"/>
    </location>
    <ligand>
        <name>Zn(2+)</name>
        <dbReference type="ChEBI" id="CHEBI:29105"/>
        <label>2</label>
    </ligand>
</feature>
<feature type="binding site" evidence="5">
    <location>
        <position position="176"/>
    </location>
    <ligand>
        <name>Zn(2+)</name>
        <dbReference type="ChEBI" id="CHEBI:29105"/>
        <label>2</label>
    </ligand>
</feature>
<feature type="binding site" evidence="5">
    <location>
        <position position="182"/>
    </location>
    <ligand>
        <name>Zn(2+)</name>
        <dbReference type="ChEBI" id="CHEBI:29105"/>
        <label>1</label>
    </ligand>
</feature>
<feature type="binding site" evidence="5">
    <location>
        <position position="185"/>
    </location>
    <ligand>
        <name>Zn(2+)</name>
        <dbReference type="ChEBI" id="CHEBI:29105"/>
        <label>1</label>
    </ligand>
</feature>
<feature type="binding site" evidence="5">
    <location>
        <position position="198"/>
    </location>
    <ligand>
        <name>Zn(2+)</name>
        <dbReference type="ChEBI" id="CHEBI:29105"/>
        <label>2</label>
    </ligand>
</feature>
<feature type="binding site" evidence="5">
    <location>
        <position position="202"/>
    </location>
    <ligand>
        <name>Zn(2+)</name>
        <dbReference type="ChEBI" id="CHEBI:29105"/>
        <label>2</label>
    </ligand>
</feature>
<feature type="site" description="Histone H3K4me3 binding" evidence="5">
    <location>
        <position position="157"/>
    </location>
</feature>
<feature type="site" description="Histone H3K4me3 binding" evidence="5">
    <location>
        <position position="168"/>
    </location>
</feature>
<feature type="site" description="Histone H3K4me3 binding" evidence="5">
    <location>
        <position position="172"/>
    </location>
</feature>
<feature type="site" description="Histone H3K4me3 binding" evidence="5">
    <location>
        <position position="180"/>
    </location>
</feature>
<feature type="turn" evidence="11">
    <location>
        <begin position="159"/>
        <end position="161"/>
    </location>
</feature>
<feature type="strand" evidence="11">
    <location>
        <begin position="165"/>
        <end position="169"/>
    </location>
</feature>
<feature type="strand" evidence="11">
    <location>
        <begin position="173"/>
        <end position="175"/>
    </location>
</feature>
<feature type="turn" evidence="11">
    <location>
        <begin position="183"/>
        <end position="185"/>
    </location>
</feature>
<feature type="helix" evidence="11">
    <location>
        <begin position="200"/>
        <end position="208"/>
    </location>
</feature>
<accession>Q08465</accession>
<accession>D6W2C7</accession>
<accession>O00025</accession>